<evidence type="ECO:0000250" key="1"/>
<evidence type="ECO:0000250" key="2">
    <source>
        <dbReference type="UniProtKB" id="P23258"/>
    </source>
</evidence>
<evidence type="ECO:0000250" key="3">
    <source>
        <dbReference type="UniProtKB" id="P83887"/>
    </source>
</evidence>
<evidence type="ECO:0000250" key="4">
    <source>
        <dbReference type="UniProtKB" id="P83888"/>
    </source>
</evidence>
<evidence type="ECO:0000255" key="5"/>
<evidence type="ECO:0000305" key="6"/>
<gene>
    <name evidence="2" type="primary">TUBG1</name>
</gene>
<feature type="chain" id="PRO_0000288846" description="Tubulin gamma-1 chain">
    <location>
        <begin position="1"/>
        <end position="451"/>
    </location>
</feature>
<feature type="binding site" evidence="5">
    <location>
        <begin position="142"/>
        <end position="148"/>
    </location>
    <ligand>
        <name>GTP</name>
        <dbReference type="ChEBI" id="CHEBI:37565"/>
    </ligand>
</feature>
<feature type="modified residue" description="Phosphoserine; by BRSK1" evidence="3">
    <location>
        <position position="131"/>
    </location>
</feature>
<keyword id="KW-0963">Cytoplasm</keyword>
<keyword id="KW-0206">Cytoskeleton</keyword>
<keyword id="KW-0342">GTP-binding</keyword>
<keyword id="KW-0493">Microtubule</keyword>
<keyword id="KW-0547">Nucleotide-binding</keyword>
<keyword id="KW-0597">Phosphoprotein</keyword>
<keyword id="KW-1185">Reference proteome</keyword>
<comment type="function">
    <text evidence="2">Tubulin is the major constituent of microtubules, protein filaments consisting of alpha- and beta-tubulin heterodimers (By similarity). Gamma-tubulin is a key component of the gamma-tubulin ring complex (gTuRC) which mediates microtubule nucleation (By similarity). The gTuRC regulates the minus-end nucleation of alpha-beta tubulin heterodimers that grow into microtubule protafilaments, a critical step in centrosome duplication and spindle formation (By similarity).</text>
</comment>
<comment type="subunit">
    <text evidence="2 3 4">Component of the gamma-tubulin ring complex (gTuRC) consisting of TUBGCP2, TUBGCP3, TUBGCP4, TUBGCP5 and TUBGCP6 and gamma-tubulin TUBG1 or TUBG2 (By similarity). TUBGCP2, TUBGCP3, TUBGCP4, TUBGCP5 and TUBGCP6 assemble in a 5:5:2:1:1 stoichiometry; each is associated with a gamma-tubulin, thereby arranging 14 gamma-tubulins in a helical manner (By similarity). Gamma-tubulin at the first position is blocked by TUBGCP3 at the last position, allowing 13 protafilaments to grow into a microtubule (By similarity). The gTuRC (via TUBGCP3 and TUBGCP6) interacts with ACTB and MZT1; the interactions form a luminal bridge that stabilizes the initial structure during complex assembly (By similarity). The gTuRC (via TUBGCP2) interacts with MZT2A/MZT2B and CDK5RAP2 (via CM1 motif); the interactions play a role in gTuRC activation (By similarity). Interacts with alpha-beta tubulin heterodimers; the interaction allows microtubules to nucleate from the gTuRC (By similarity). Interacts with B9D2 (By similarity). Interacts with CDK5RAP2; the interaction is leading to centrosomal localization of TUBG1 and CDK5RAP2 (By similarity). Interacts with CIMAP3 (By similarity). Interacts with SAS6 and NUP62 at the centrosome (By similarity). Interacts with EML3 (phosphorylated at 'Thr-881') and HAUS8 (By similarity). Interacts with DNM2; this interaction may participate in centrosome cohesion (By similarity). Interacts with CCDC66 (By similarity).</text>
</comment>
<comment type="subcellular location">
    <subcellularLocation>
        <location evidence="2">Cytoplasm</location>
        <location evidence="2">Cytoskeleton</location>
        <location evidence="2">Microtubule organizing center</location>
        <location evidence="2">Centrosome</location>
    </subcellularLocation>
    <subcellularLocation>
        <location evidence="2">Cytoplasm</location>
        <location evidence="2">Cytoskeleton</location>
        <location evidence="2">Spindle</location>
    </subcellularLocation>
    <text evidence="2">Localizes to mitotic spindle microtubules.</text>
</comment>
<comment type="PTM">
    <text evidence="1">Phosphorylation at Ser-131 by BRSK1 regulates centrosome duplication, possibly by mediating relocation of gamma-tubulin and its associated proteins from the cytoplasm to the centrosome.</text>
</comment>
<comment type="similarity">
    <text evidence="6">Belongs to the tubulin family.</text>
</comment>
<protein>
    <recommendedName>
        <fullName evidence="2">Tubulin gamma-1 chain</fullName>
    </recommendedName>
    <alternativeName>
        <fullName>Gamma-1-tubulin</fullName>
    </alternativeName>
</protein>
<reference key="1">
    <citation type="submission" date="2006-08" db="EMBL/GenBank/DDBJ databases">
        <authorList>
            <consortium name="NIH - Mammalian Gene Collection (MGC) project"/>
        </authorList>
    </citation>
    <scope>NUCLEOTIDE SEQUENCE [LARGE SCALE MRNA]</scope>
    <source>
        <strain>Hereford</strain>
        <tissue>Thymus</tissue>
    </source>
</reference>
<dbReference type="EMBL" id="BC120225">
    <property type="protein sequence ID" value="AAI20226.1"/>
    <property type="molecule type" value="mRNA"/>
</dbReference>
<dbReference type="RefSeq" id="NP_001069723.1">
    <property type="nucleotide sequence ID" value="NM_001076255.2"/>
</dbReference>
<dbReference type="SMR" id="Q0VCD2"/>
<dbReference type="BioGRID" id="197666">
    <property type="interactions" value="1"/>
</dbReference>
<dbReference type="FunCoup" id="Q0VCD2">
    <property type="interactions" value="4087"/>
</dbReference>
<dbReference type="STRING" id="9913.ENSBTAP00000055684"/>
<dbReference type="PaxDb" id="9913-ENSBTAP00000055684"/>
<dbReference type="GeneID" id="541101"/>
<dbReference type="KEGG" id="bta:541101"/>
<dbReference type="CTD" id="7283"/>
<dbReference type="VEuPathDB" id="HostDB:ENSBTAG00000048152"/>
<dbReference type="eggNOG" id="KOG1374">
    <property type="taxonomic scope" value="Eukaryota"/>
</dbReference>
<dbReference type="HOGENOM" id="CLU_015718_1_0_1"/>
<dbReference type="InParanoid" id="Q0VCD2"/>
<dbReference type="OMA" id="HRYISIL"/>
<dbReference type="OrthoDB" id="10249382at2759"/>
<dbReference type="TreeFam" id="TF300477"/>
<dbReference type="Reactome" id="R-BTA-2565942">
    <property type="pathway name" value="Regulation of PLK1 Activity at G2/M Transition"/>
</dbReference>
<dbReference type="Reactome" id="R-BTA-380259">
    <property type="pathway name" value="Loss of Nlp from mitotic centrosomes"/>
</dbReference>
<dbReference type="Reactome" id="R-BTA-380270">
    <property type="pathway name" value="Recruitment of mitotic centrosome proteins and complexes"/>
</dbReference>
<dbReference type="Reactome" id="R-BTA-380284">
    <property type="pathway name" value="Loss of proteins required for interphase microtubule organization from the centrosome"/>
</dbReference>
<dbReference type="Reactome" id="R-BTA-380320">
    <property type="pathway name" value="Recruitment of NuMA to mitotic centrosomes"/>
</dbReference>
<dbReference type="Reactome" id="R-BTA-5620912">
    <property type="pathway name" value="Anchoring of the basal body to the plasma membrane"/>
</dbReference>
<dbReference type="Reactome" id="R-BTA-8854518">
    <property type="pathway name" value="AURKA Activation by TPX2"/>
</dbReference>
<dbReference type="Proteomes" id="UP000009136">
    <property type="component" value="Chromosome 19"/>
</dbReference>
<dbReference type="Bgee" id="ENSBTAG00000048152">
    <property type="expression patterns" value="Expressed in choroid plexus and 106 other cell types or tissues"/>
</dbReference>
<dbReference type="GO" id="GO:0005813">
    <property type="term" value="C:centrosome"/>
    <property type="evidence" value="ECO:0000250"/>
    <property type="project" value="UniProtKB"/>
</dbReference>
<dbReference type="GO" id="GO:0005737">
    <property type="term" value="C:cytoplasm"/>
    <property type="evidence" value="ECO:0000250"/>
    <property type="project" value="UniProtKB"/>
</dbReference>
<dbReference type="GO" id="GO:0000931">
    <property type="term" value="C:gamma-tubulin ring complex"/>
    <property type="evidence" value="ECO:0000318"/>
    <property type="project" value="GO_Central"/>
</dbReference>
<dbReference type="GO" id="GO:1990498">
    <property type="term" value="C:mitotic spindle microtubule"/>
    <property type="evidence" value="ECO:0000250"/>
    <property type="project" value="UniProtKB"/>
</dbReference>
<dbReference type="GO" id="GO:0005634">
    <property type="term" value="C:nucleus"/>
    <property type="evidence" value="ECO:0000318"/>
    <property type="project" value="GO_Central"/>
</dbReference>
<dbReference type="GO" id="GO:0005827">
    <property type="term" value="C:polar microtubule"/>
    <property type="evidence" value="ECO:0000250"/>
    <property type="project" value="UniProtKB"/>
</dbReference>
<dbReference type="GO" id="GO:0005819">
    <property type="term" value="C:spindle"/>
    <property type="evidence" value="ECO:0000318"/>
    <property type="project" value="GO_Central"/>
</dbReference>
<dbReference type="GO" id="GO:0005525">
    <property type="term" value="F:GTP binding"/>
    <property type="evidence" value="ECO:0000318"/>
    <property type="project" value="GO_Central"/>
</dbReference>
<dbReference type="GO" id="GO:0140490">
    <property type="term" value="F:microtubule nucleator activity"/>
    <property type="evidence" value="ECO:0000318"/>
    <property type="project" value="GO_Central"/>
</dbReference>
<dbReference type="GO" id="GO:0031122">
    <property type="term" value="P:cytoplasmic microtubule organization"/>
    <property type="evidence" value="ECO:0007669"/>
    <property type="project" value="InterPro"/>
</dbReference>
<dbReference type="GO" id="GO:0000212">
    <property type="term" value="P:meiotic spindle organization"/>
    <property type="evidence" value="ECO:0000318"/>
    <property type="project" value="GO_Central"/>
</dbReference>
<dbReference type="GO" id="GO:0007020">
    <property type="term" value="P:microtubule nucleation"/>
    <property type="evidence" value="ECO:0000318"/>
    <property type="project" value="GO_Central"/>
</dbReference>
<dbReference type="GO" id="GO:0000278">
    <property type="term" value="P:mitotic cell cycle"/>
    <property type="evidence" value="ECO:0000318"/>
    <property type="project" value="GO_Central"/>
</dbReference>
<dbReference type="GO" id="GO:0000070">
    <property type="term" value="P:mitotic sister chromatid segregation"/>
    <property type="evidence" value="ECO:0000318"/>
    <property type="project" value="GO_Central"/>
</dbReference>
<dbReference type="GO" id="GO:0007052">
    <property type="term" value="P:mitotic spindle organization"/>
    <property type="evidence" value="ECO:0000318"/>
    <property type="project" value="GO_Central"/>
</dbReference>
<dbReference type="CDD" id="cd02188">
    <property type="entry name" value="gamma_tubulin"/>
    <property type="match status" value="1"/>
</dbReference>
<dbReference type="FunFam" id="1.10.287.600:FF:000004">
    <property type="entry name" value="Tubulin gamma chain"/>
    <property type="match status" value="1"/>
</dbReference>
<dbReference type="FunFam" id="3.30.1330.20:FF:000003">
    <property type="entry name" value="Tubulin gamma chain"/>
    <property type="match status" value="1"/>
</dbReference>
<dbReference type="FunFam" id="3.40.50.1440:FF:000010">
    <property type="entry name" value="Tubulin gamma chain"/>
    <property type="match status" value="1"/>
</dbReference>
<dbReference type="Gene3D" id="1.10.287.600">
    <property type="entry name" value="Helix hairpin bin"/>
    <property type="match status" value="1"/>
</dbReference>
<dbReference type="Gene3D" id="3.30.1330.20">
    <property type="entry name" value="Tubulin/FtsZ, C-terminal domain"/>
    <property type="match status" value="1"/>
</dbReference>
<dbReference type="Gene3D" id="3.40.50.1440">
    <property type="entry name" value="Tubulin/FtsZ, GTPase domain"/>
    <property type="match status" value="1"/>
</dbReference>
<dbReference type="InterPro" id="IPR002454">
    <property type="entry name" value="Gamma_tubulin"/>
</dbReference>
<dbReference type="InterPro" id="IPR008280">
    <property type="entry name" value="Tub_FtsZ_C"/>
</dbReference>
<dbReference type="InterPro" id="IPR000217">
    <property type="entry name" value="Tubulin"/>
</dbReference>
<dbReference type="InterPro" id="IPR037103">
    <property type="entry name" value="Tubulin/FtsZ-like_C"/>
</dbReference>
<dbReference type="InterPro" id="IPR018316">
    <property type="entry name" value="Tubulin/FtsZ_2-layer-sand-dom"/>
</dbReference>
<dbReference type="InterPro" id="IPR036525">
    <property type="entry name" value="Tubulin/FtsZ_GTPase_sf"/>
</dbReference>
<dbReference type="InterPro" id="IPR023123">
    <property type="entry name" value="Tubulin_C"/>
</dbReference>
<dbReference type="InterPro" id="IPR017975">
    <property type="entry name" value="Tubulin_CS"/>
</dbReference>
<dbReference type="InterPro" id="IPR003008">
    <property type="entry name" value="Tubulin_FtsZ_GTPase"/>
</dbReference>
<dbReference type="PANTHER" id="PTHR11588">
    <property type="entry name" value="TUBULIN"/>
    <property type="match status" value="1"/>
</dbReference>
<dbReference type="Pfam" id="PF00091">
    <property type="entry name" value="Tubulin"/>
    <property type="match status" value="1"/>
</dbReference>
<dbReference type="Pfam" id="PF03953">
    <property type="entry name" value="Tubulin_C"/>
    <property type="match status" value="1"/>
</dbReference>
<dbReference type="PRINTS" id="PR01164">
    <property type="entry name" value="GAMMATUBULIN"/>
</dbReference>
<dbReference type="PRINTS" id="PR01161">
    <property type="entry name" value="TUBULIN"/>
</dbReference>
<dbReference type="SMART" id="SM00864">
    <property type="entry name" value="Tubulin"/>
    <property type="match status" value="1"/>
</dbReference>
<dbReference type="SMART" id="SM00865">
    <property type="entry name" value="Tubulin_C"/>
    <property type="match status" value="1"/>
</dbReference>
<dbReference type="SUPFAM" id="SSF55307">
    <property type="entry name" value="Tubulin C-terminal domain-like"/>
    <property type="match status" value="1"/>
</dbReference>
<dbReference type="SUPFAM" id="SSF52490">
    <property type="entry name" value="Tubulin nucleotide-binding domain-like"/>
    <property type="match status" value="1"/>
</dbReference>
<dbReference type="PROSITE" id="PS00227">
    <property type="entry name" value="TUBULIN"/>
    <property type="match status" value="1"/>
</dbReference>
<sequence length="451" mass="51148">MPREIITLQLGQCGNQIGFEFWKQLCAEHGISPEGIVEEFATEGTDRKDVFFYQADDEHYIPRAVLLDLEPRVIHSILNSPYAKLYNPENIYLSEHGGGAGNNWASGFSQGEKIHEDIFDIIDREADGSDSLEGFVLCHSIAGGTGSGLGSYLLERLNDRYPKKLVQTYSVFPNQDEMSDVVVQPYNSLLTLKRLTQNADCVVVLDNTALNRIATDRLHIQNPSFSQINQLVSTIMSASTTTLRYPGYMNNDLIGLIASLIPTPRLHFLMTGYTPLTTDQSVASVRKTTVLDVMRRLLQPKNVMVSTGRDRQTNHCYIAILNIIQGEVDPTQVHKSLQRIRERKLANFIPWGPASIQVALSRKSPYLPSAHRVSGLMMANHTSISSLFERTCRQYDKLRKREAFLEQFRKEDIFKENFDELDTSREIVQQLIDEYHAATRPDYISWGTQEQ</sequence>
<organism>
    <name type="scientific">Bos taurus</name>
    <name type="common">Bovine</name>
    <dbReference type="NCBI Taxonomy" id="9913"/>
    <lineage>
        <taxon>Eukaryota</taxon>
        <taxon>Metazoa</taxon>
        <taxon>Chordata</taxon>
        <taxon>Craniata</taxon>
        <taxon>Vertebrata</taxon>
        <taxon>Euteleostomi</taxon>
        <taxon>Mammalia</taxon>
        <taxon>Eutheria</taxon>
        <taxon>Laurasiatheria</taxon>
        <taxon>Artiodactyla</taxon>
        <taxon>Ruminantia</taxon>
        <taxon>Pecora</taxon>
        <taxon>Bovidae</taxon>
        <taxon>Bovinae</taxon>
        <taxon>Bos</taxon>
    </lineage>
</organism>
<accession>Q0VCD2</accession>
<name>TBG1_BOVIN</name>
<proteinExistence type="evidence at transcript level"/>